<gene>
    <name type="primary">aguA</name>
</gene>
<organism>
    <name type="scientific">Aspergillus niger</name>
    <dbReference type="NCBI Taxonomy" id="5061"/>
    <lineage>
        <taxon>Eukaryota</taxon>
        <taxon>Fungi</taxon>
        <taxon>Dikarya</taxon>
        <taxon>Ascomycota</taxon>
        <taxon>Pezizomycotina</taxon>
        <taxon>Eurotiomycetes</taxon>
        <taxon>Eurotiomycetidae</taxon>
        <taxon>Eurotiales</taxon>
        <taxon>Aspergillaceae</taxon>
        <taxon>Aspergillus</taxon>
        <taxon>Aspergillus subgen. Circumdati</taxon>
    </lineage>
</organism>
<name>AGUA_ASPNG</name>
<comment type="function">
    <text evidence="1">Alpha-glucuronidase involved in the hydrolysis of xylan, a major structural heterogeneous polysaccharide found in plant biomass representing the second most abundant polysaccharide in the biosphere, after cellulose. Releases 4-O-methylglucuronic acid from xylan (By similarity).</text>
</comment>
<comment type="catalytic activity">
    <reaction>
        <text>an alpha-D-glucuronoside + H2O = D-glucuronate + an alcohol</text>
        <dbReference type="Rhea" id="RHEA:20005"/>
        <dbReference type="ChEBI" id="CHEBI:15377"/>
        <dbReference type="ChEBI" id="CHEBI:30879"/>
        <dbReference type="ChEBI" id="CHEBI:58720"/>
        <dbReference type="ChEBI" id="CHEBI:58899"/>
        <dbReference type="EC" id="3.2.1.139"/>
    </reaction>
</comment>
<comment type="subcellular location">
    <subcellularLocation>
        <location evidence="1">Secreted</location>
    </subcellularLocation>
</comment>
<comment type="induction">
    <text evidence="3">Expressed in the presence of D-xylose and L-arabinose and at very low level in the presence of D-glucuronic acid. Expression is under the control of the xylanolytic transcriptional activator xlnR and the carbon catabolite repressor creA.</text>
</comment>
<comment type="similarity">
    <text evidence="4">Belongs to the glycosyl hydrolase 67 family.</text>
</comment>
<evidence type="ECO:0000250" key="1"/>
<evidence type="ECO:0000255" key="2"/>
<evidence type="ECO:0000269" key="3">
    <source>
    </source>
</evidence>
<evidence type="ECO:0000305" key="4"/>
<keyword id="KW-0119">Carbohydrate metabolism</keyword>
<keyword id="KW-0325">Glycoprotein</keyword>
<keyword id="KW-0326">Glycosidase</keyword>
<keyword id="KW-0378">Hydrolase</keyword>
<keyword id="KW-0624">Polysaccharide degradation</keyword>
<keyword id="KW-0964">Secreted</keyword>
<keyword id="KW-0732">Signal</keyword>
<keyword id="KW-0858">Xylan degradation</keyword>
<reference key="1">
    <citation type="journal article" date="2002" name="Mol. Genet. Genomics">
        <title>Regulation of the a-glucuronidase encoding gene (aguA) from Aspergillus niger.</title>
        <authorList>
            <person name="de Vries R.P."/>
            <person name="van de Vondervoort P.J.I."/>
            <person name="Hendriks L."/>
            <person name="van de Belt M."/>
            <person name="Visser J.V."/>
        </authorList>
    </citation>
    <scope>NUCLEOTIDE SEQUENCE [GENOMIC DNA]</scope>
    <scope>INDUCTION</scope>
    <source>
        <strain>ATCC 9029 / NRRL 3 / CBS 120.49 / DSM 2466 / N400 / FGSC 732</strain>
    </source>
</reference>
<proteinExistence type="evidence at transcript level"/>
<dbReference type="EC" id="3.2.1.139"/>
<dbReference type="EMBL" id="AJ290451">
    <property type="protein sequence ID" value="CAC38119.1"/>
    <property type="molecule type" value="Genomic_DNA"/>
</dbReference>
<dbReference type="SMR" id="Q96WX9"/>
<dbReference type="CAZy" id="GH67">
    <property type="family name" value="Glycoside Hydrolase Family 67"/>
</dbReference>
<dbReference type="GlyCosmos" id="Q96WX9">
    <property type="glycosylation" value="15 sites, No reported glycans"/>
</dbReference>
<dbReference type="PaxDb" id="5061-CADANGAP00011295"/>
<dbReference type="VEuPathDB" id="FungiDB:An14g05800"/>
<dbReference type="VEuPathDB" id="FungiDB:ASPNIDRAFT2_1161751"/>
<dbReference type="VEuPathDB" id="FungiDB:ATCC64974_4680"/>
<dbReference type="VEuPathDB" id="FungiDB:M747DRAFT_320051"/>
<dbReference type="eggNOG" id="ENOG502QWS4">
    <property type="taxonomic scope" value="Eukaryota"/>
</dbReference>
<dbReference type="GO" id="GO:0005576">
    <property type="term" value="C:extracellular region"/>
    <property type="evidence" value="ECO:0007669"/>
    <property type="project" value="UniProtKB-SubCell"/>
</dbReference>
<dbReference type="GO" id="GO:0046559">
    <property type="term" value="F:alpha-glucuronidase activity"/>
    <property type="evidence" value="ECO:0007669"/>
    <property type="project" value="UniProtKB-EC"/>
</dbReference>
<dbReference type="GO" id="GO:0045493">
    <property type="term" value="P:xylan catabolic process"/>
    <property type="evidence" value="ECO:0007669"/>
    <property type="project" value="UniProtKB-KW"/>
</dbReference>
<dbReference type="CDD" id="cd02795">
    <property type="entry name" value="CBM6-CBM35-CBM36_like"/>
    <property type="match status" value="1"/>
</dbReference>
<dbReference type="FunFam" id="3.20.20.80:FF:000096">
    <property type="entry name" value="Xylan alpha-1,2-glucuronidase"/>
    <property type="match status" value="1"/>
</dbReference>
<dbReference type="Gene3D" id="3.90.1330.10">
    <property type="entry name" value="Alpha-glucuronidase, C-terminal domain"/>
    <property type="match status" value="1"/>
</dbReference>
<dbReference type="Gene3D" id="3.30.379.10">
    <property type="entry name" value="Chitobiase/beta-hexosaminidase domain 2-like"/>
    <property type="match status" value="1"/>
</dbReference>
<dbReference type="Gene3D" id="3.20.20.80">
    <property type="entry name" value="Glycosidases"/>
    <property type="match status" value="1"/>
</dbReference>
<dbReference type="InterPro" id="IPR037054">
    <property type="entry name" value="A-glucoronidase_C_sf"/>
</dbReference>
<dbReference type="InterPro" id="IPR011395">
    <property type="entry name" value="Glyco_hydro_67_aGlcAse"/>
</dbReference>
<dbReference type="InterPro" id="IPR005154">
    <property type="entry name" value="Glyco_hydro_67_aGlcAse_N"/>
</dbReference>
<dbReference type="InterPro" id="IPR011099">
    <property type="entry name" value="Glyco_hydro_67_C"/>
</dbReference>
<dbReference type="InterPro" id="IPR011100">
    <property type="entry name" value="Glyco_hydro_67_cat"/>
</dbReference>
<dbReference type="InterPro" id="IPR017853">
    <property type="entry name" value="Glycoside_hydrolase_SF"/>
</dbReference>
<dbReference type="InterPro" id="IPR029018">
    <property type="entry name" value="Hex-like_dom2"/>
</dbReference>
<dbReference type="PANTHER" id="PTHR39207">
    <property type="entry name" value="ALPHA-GLUCURONIDASE A"/>
    <property type="match status" value="1"/>
</dbReference>
<dbReference type="PANTHER" id="PTHR39207:SF1">
    <property type="entry name" value="ALPHA-GLUCURONIDASE A"/>
    <property type="match status" value="1"/>
</dbReference>
<dbReference type="Pfam" id="PF07477">
    <property type="entry name" value="Glyco_hydro_67C"/>
    <property type="match status" value="1"/>
</dbReference>
<dbReference type="Pfam" id="PF07488">
    <property type="entry name" value="Glyco_hydro_67M"/>
    <property type="match status" value="1"/>
</dbReference>
<dbReference type="Pfam" id="PF03648">
    <property type="entry name" value="Glyco_hydro_67N"/>
    <property type="match status" value="1"/>
</dbReference>
<dbReference type="PIRSF" id="PIRSF029900">
    <property type="entry name" value="Alpha-glucuronds"/>
    <property type="match status" value="1"/>
</dbReference>
<dbReference type="SUPFAM" id="SSF51445">
    <property type="entry name" value="(Trans)glycosidases"/>
    <property type="match status" value="1"/>
</dbReference>
<dbReference type="SUPFAM" id="SSF55545">
    <property type="entry name" value="beta-N-acetylhexosaminidase-like domain"/>
    <property type="match status" value="1"/>
</dbReference>
<feature type="signal peptide" evidence="2">
    <location>
        <begin position="1"/>
        <end position="20"/>
    </location>
</feature>
<feature type="chain" id="PRO_5000066287" description="Probable alpha-glucuronidase A">
    <location>
        <begin position="21"/>
        <end position="841"/>
    </location>
</feature>
<feature type="glycosylation site" description="N-linked (GlcNAc...) asparagine" evidence="2">
    <location>
        <position position="51"/>
    </location>
</feature>
<feature type="glycosylation site" description="N-linked (GlcNAc...) asparagine" evidence="2">
    <location>
        <position position="76"/>
    </location>
</feature>
<feature type="glycosylation site" description="N-linked (GlcNAc...) asparagine" evidence="2">
    <location>
        <position position="85"/>
    </location>
</feature>
<feature type="glycosylation site" description="N-linked (GlcNAc...) asparagine" evidence="2">
    <location>
        <position position="149"/>
    </location>
</feature>
<feature type="glycosylation site" description="N-linked (GlcNAc...) asparagine" evidence="2">
    <location>
        <position position="222"/>
    </location>
</feature>
<feature type="glycosylation site" description="N-linked (GlcNAc...) asparagine" evidence="2">
    <location>
        <position position="279"/>
    </location>
</feature>
<feature type="glycosylation site" description="N-linked (GlcNAc...) asparagine" evidence="2">
    <location>
        <position position="310"/>
    </location>
</feature>
<feature type="glycosylation site" description="N-linked (GlcNAc...) asparagine" evidence="2">
    <location>
        <position position="343"/>
    </location>
</feature>
<feature type="glycosylation site" description="N-linked (GlcNAc...) asparagine" evidence="2">
    <location>
        <position position="450"/>
    </location>
</feature>
<feature type="glycosylation site" description="N-linked (GlcNAc...) asparagine" evidence="2">
    <location>
        <position position="465"/>
    </location>
</feature>
<feature type="glycosylation site" description="N-linked (GlcNAc...) asparagine" evidence="2">
    <location>
        <position position="527"/>
    </location>
</feature>
<feature type="glycosylation site" description="N-linked (GlcNAc...) asparagine" evidence="2">
    <location>
        <position position="576"/>
    </location>
</feature>
<feature type="glycosylation site" description="N-linked (GlcNAc...) asparagine" evidence="2">
    <location>
        <position position="682"/>
    </location>
</feature>
<feature type="glycosylation site" description="N-linked (GlcNAc...) asparagine" evidence="2">
    <location>
        <position position="723"/>
    </location>
</feature>
<feature type="glycosylation site" description="N-linked (GlcNAc...) asparagine" evidence="2">
    <location>
        <position position="732"/>
    </location>
</feature>
<protein>
    <recommendedName>
        <fullName>Probable alpha-glucuronidase A</fullName>
        <ecNumber>3.2.1.139</ecNumber>
    </recommendedName>
    <alternativeName>
        <fullName>Alpha-glucosiduronase A</fullName>
    </alternativeName>
</protein>
<accession>Q96WX9</accession>
<sequence>MRGLNLFQLILALLLSMVAAEDGYDGWLRYAPVSCDLRCRQALPSHVVLLNSTKGSPIETAGRELKAGFQSILSTNLTSRPFQCNSSTSILVATLDEYRQRCRDINVPELDPDGFWLQSEGDTVRILGKDARGALYGAYEYLAMVAQRNFSRVAYATSPHAPIRWVNQWDNMDGSIERGYGGASIFFKDGTVVEDMAPVEQYARLLASIRINAIVVNNVNANATLLLPENMKGLGRIADACRPYGVQIGISLNFASPEDLGGLNTYDPLDPGVIAWWQNITDSLYTYVPDMAGYLVKADSEGQPGPDTYNRTLSQGANLFARALQPYGGVLMYRAFVYDDNLNESDWKADRAKAAVEYFKDLDGQFEENVVIQIKYGPIDFQVREPTSPLFANLYHTNTAIELEVSQEYLGQQCHLVYLPPLWKTVLDFDLRVDHKPSMVRDIISGQRFNRTLGGWAAVVNVGTNRTWLGSHLAMSNLYAYGRLAWSPTDESEQILEDWTRLTFGQNHHVINTISDMSMTSWPAYENYTGNLGIQTLTDILYTHYGPNPATQDNNGWGQWTRADHDSVGMDRTIRNGTGYTGQYPEEVARVYESLESTPDDLVLWFHHVPWTHRLHSGVTVIQHFYNAHYAGAEAAHGFVRQWESLEGLIDRERYEAMRSRLVYQAGHSIVWRDAINNFYYNMTGIPDVAGRVGHHPWRIEAESMRLDGYQTYTVSPFEAASNTTAIITTSNSTTGTARTSIKAPSGVYDIGVNYYDLYGGQSKWTLSVGDKVVGQWLGDMEHNSLGHTPSIYLDGHSATRITFHGVGIRQGDQLKIVGEANGVEPAPLDYIVLLPPGLVD</sequence>